<feature type="chain" id="PRO_0000167407" description="Ribosome-recycling factor">
    <location>
        <begin position="1"/>
        <end position="186"/>
    </location>
</feature>
<sequence>MVDVKTIIEESQEKMDMAVMYLEEALAHIRAGKASTRLLDGIRVDSYGSMVPISNVAAVTTPDARSITIKPWDKSMFRVIEKAIIDSDLGIMPENNGEIIRIGIPPLTEERRKQLAKQCKAEGETAKVSIRNARRDGIDALKKAVKDGLAEDEQKNAEAKLQKVHDKYIAKIEEMLAEKDKEIMTV</sequence>
<accession>Q64YJ0</accession>
<gene>
    <name evidence="1" type="primary">frr</name>
    <name type="ordered locus">BF0689</name>
</gene>
<protein>
    <recommendedName>
        <fullName evidence="1">Ribosome-recycling factor</fullName>
        <shortName evidence="1">RRF</shortName>
    </recommendedName>
    <alternativeName>
        <fullName evidence="1">Ribosome-releasing factor</fullName>
    </alternativeName>
</protein>
<organism>
    <name type="scientific">Bacteroides fragilis (strain YCH46)</name>
    <dbReference type="NCBI Taxonomy" id="295405"/>
    <lineage>
        <taxon>Bacteria</taxon>
        <taxon>Pseudomonadati</taxon>
        <taxon>Bacteroidota</taxon>
        <taxon>Bacteroidia</taxon>
        <taxon>Bacteroidales</taxon>
        <taxon>Bacteroidaceae</taxon>
        <taxon>Bacteroides</taxon>
    </lineage>
</organism>
<dbReference type="EMBL" id="AP006841">
    <property type="protein sequence ID" value="BAD47436.1"/>
    <property type="molecule type" value="Genomic_DNA"/>
</dbReference>
<dbReference type="RefSeq" id="WP_005775374.1">
    <property type="nucleotide sequence ID" value="NZ_UYXF01000001.1"/>
</dbReference>
<dbReference type="RefSeq" id="YP_097970.1">
    <property type="nucleotide sequence ID" value="NC_006347.1"/>
</dbReference>
<dbReference type="SMR" id="Q64YJ0"/>
<dbReference type="STRING" id="295405.BF0689"/>
<dbReference type="GeneID" id="93106274"/>
<dbReference type="KEGG" id="bfr:BF0689"/>
<dbReference type="PATRIC" id="fig|295405.11.peg.697"/>
<dbReference type="HOGENOM" id="CLU_073981_2_0_10"/>
<dbReference type="OrthoDB" id="9804006at2"/>
<dbReference type="Proteomes" id="UP000002197">
    <property type="component" value="Chromosome"/>
</dbReference>
<dbReference type="GO" id="GO:0005737">
    <property type="term" value="C:cytoplasm"/>
    <property type="evidence" value="ECO:0007669"/>
    <property type="project" value="UniProtKB-SubCell"/>
</dbReference>
<dbReference type="GO" id="GO:0043023">
    <property type="term" value="F:ribosomal large subunit binding"/>
    <property type="evidence" value="ECO:0007669"/>
    <property type="project" value="TreeGrafter"/>
</dbReference>
<dbReference type="GO" id="GO:0006415">
    <property type="term" value="P:translational termination"/>
    <property type="evidence" value="ECO:0007669"/>
    <property type="project" value="UniProtKB-UniRule"/>
</dbReference>
<dbReference type="CDD" id="cd00520">
    <property type="entry name" value="RRF"/>
    <property type="match status" value="1"/>
</dbReference>
<dbReference type="FunFam" id="1.10.132.20:FF:000001">
    <property type="entry name" value="Ribosome-recycling factor"/>
    <property type="match status" value="1"/>
</dbReference>
<dbReference type="FunFam" id="3.30.1360.40:FF:000001">
    <property type="entry name" value="Ribosome-recycling factor"/>
    <property type="match status" value="1"/>
</dbReference>
<dbReference type="Gene3D" id="3.30.1360.40">
    <property type="match status" value="1"/>
</dbReference>
<dbReference type="Gene3D" id="1.10.132.20">
    <property type="entry name" value="Ribosome-recycling factor"/>
    <property type="match status" value="1"/>
</dbReference>
<dbReference type="HAMAP" id="MF_00040">
    <property type="entry name" value="RRF"/>
    <property type="match status" value="1"/>
</dbReference>
<dbReference type="InterPro" id="IPR002661">
    <property type="entry name" value="Ribosome_recyc_fac"/>
</dbReference>
<dbReference type="InterPro" id="IPR023584">
    <property type="entry name" value="Ribosome_recyc_fac_dom"/>
</dbReference>
<dbReference type="InterPro" id="IPR036191">
    <property type="entry name" value="RRF_sf"/>
</dbReference>
<dbReference type="NCBIfam" id="TIGR00496">
    <property type="entry name" value="frr"/>
    <property type="match status" value="1"/>
</dbReference>
<dbReference type="PANTHER" id="PTHR20982:SF3">
    <property type="entry name" value="MITOCHONDRIAL RIBOSOME RECYCLING FACTOR PSEUDO 1"/>
    <property type="match status" value="1"/>
</dbReference>
<dbReference type="PANTHER" id="PTHR20982">
    <property type="entry name" value="RIBOSOME RECYCLING FACTOR"/>
    <property type="match status" value="1"/>
</dbReference>
<dbReference type="Pfam" id="PF01765">
    <property type="entry name" value="RRF"/>
    <property type="match status" value="1"/>
</dbReference>
<dbReference type="SUPFAM" id="SSF55194">
    <property type="entry name" value="Ribosome recycling factor, RRF"/>
    <property type="match status" value="1"/>
</dbReference>
<evidence type="ECO:0000255" key="1">
    <source>
        <dbReference type="HAMAP-Rule" id="MF_00040"/>
    </source>
</evidence>
<name>RRF_BACFR</name>
<keyword id="KW-0963">Cytoplasm</keyword>
<keyword id="KW-0648">Protein biosynthesis</keyword>
<comment type="function">
    <text evidence="1">Responsible for the release of ribosomes from messenger RNA at the termination of protein biosynthesis. May increase the efficiency of translation by recycling ribosomes from one round of translation to another.</text>
</comment>
<comment type="subcellular location">
    <subcellularLocation>
        <location evidence="1">Cytoplasm</location>
    </subcellularLocation>
</comment>
<comment type="similarity">
    <text evidence="1">Belongs to the RRF family.</text>
</comment>
<reference key="1">
    <citation type="journal article" date="2004" name="Proc. Natl. Acad. Sci. U.S.A.">
        <title>Genomic analysis of Bacteroides fragilis reveals extensive DNA inversions regulating cell surface adaptation.</title>
        <authorList>
            <person name="Kuwahara T."/>
            <person name="Yamashita A."/>
            <person name="Hirakawa H."/>
            <person name="Nakayama H."/>
            <person name="Toh H."/>
            <person name="Okada N."/>
            <person name="Kuhara S."/>
            <person name="Hattori M."/>
            <person name="Hayashi T."/>
            <person name="Ohnishi Y."/>
        </authorList>
    </citation>
    <scope>NUCLEOTIDE SEQUENCE [LARGE SCALE GENOMIC DNA]</scope>
    <source>
        <strain>YCH46</strain>
    </source>
</reference>
<proteinExistence type="inferred from homology"/>